<organism>
    <name type="scientific">Mus musculus</name>
    <name type="common">Mouse</name>
    <dbReference type="NCBI Taxonomy" id="10090"/>
    <lineage>
        <taxon>Eukaryota</taxon>
        <taxon>Metazoa</taxon>
        <taxon>Chordata</taxon>
        <taxon>Craniata</taxon>
        <taxon>Vertebrata</taxon>
        <taxon>Euteleostomi</taxon>
        <taxon>Mammalia</taxon>
        <taxon>Eutheria</taxon>
        <taxon>Euarchontoglires</taxon>
        <taxon>Glires</taxon>
        <taxon>Rodentia</taxon>
        <taxon>Myomorpha</taxon>
        <taxon>Muroidea</taxon>
        <taxon>Muridae</taxon>
        <taxon>Murinae</taxon>
        <taxon>Mus</taxon>
        <taxon>Mus</taxon>
    </lineage>
</organism>
<evidence type="ECO:0000250" key="1"/>
<evidence type="ECO:0000250" key="2">
    <source>
        <dbReference type="UniProtKB" id="P19525"/>
    </source>
</evidence>
<evidence type="ECO:0000255" key="3">
    <source>
        <dbReference type="PROSITE-ProRule" id="PRU00159"/>
    </source>
</evidence>
<evidence type="ECO:0000255" key="4">
    <source>
        <dbReference type="PROSITE-ProRule" id="PRU00266"/>
    </source>
</evidence>
<evidence type="ECO:0000255" key="5">
    <source>
        <dbReference type="PROSITE-ProRule" id="PRU10027"/>
    </source>
</evidence>
<evidence type="ECO:0000256" key="6">
    <source>
        <dbReference type="SAM" id="MobiDB-lite"/>
    </source>
</evidence>
<evidence type="ECO:0000269" key="7">
    <source>
    </source>
</evidence>
<evidence type="ECO:0000269" key="8">
    <source>
    </source>
</evidence>
<evidence type="ECO:0000269" key="9">
    <source>
    </source>
</evidence>
<evidence type="ECO:0000269" key="10">
    <source>
    </source>
</evidence>
<evidence type="ECO:0000269" key="11">
    <source>
    </source>
</evidence>
<evidence type="ECO:0000269" key="12">
    <source>
    </source>
</evidence>
<evidence type="ECO:0000269" key="13">
    <source>
    </source>
</evidence>
<evidence type="ECO:0000269" key="14">
    <source>
    </source>
</evidence>
<evidence type="ECO:0000269" key="15">
    <source>
    </source>
</evidence>
<evidence type="ECO:0000269" key="16">
    <source>
    </source>
</evidence>
<evidence type="ECO:0000269" key="17">
    <source>
    </source>
</evidence>
<evidence type="ECO:0000269" key="18">
    <source>
    </source>
</evidence>
<evidence type="ECO:0000269" key="19">
    <source>
    </source>
</evidence>
<evidence type="ECO:0000269" key="20">
    <source>
    </source>
</evidence>
<evidence type="ECO:0000269" key="21">
    <source>
    </source>
</evidence>
<evidence type="ECO:0000269" key="22">
    <source>
    </source>
</evidence>
<evidence type="ECO:0000269" key="23">
    <source>
    </source>
</evidence>
<evidence type="ECO:0000303" key="24">
    <source>
    </source>
</evidence>
<evidence type="ECO:0000305" key="25"/>
<evidence type="ECO:0007829" key="26">
    <source>
        <dbReference type="PDB" id="1X48"/>
    </source>
</evidence>
<evidence type="ECO:0007829" key="27">
    <source>
        <dbReference type="PDB" id="1X49"/>
    </source>
</evidence>
<comment type="function">
    <text evidence="2 10 11 12 13 14 15 16 17 18 19 20 21 22 23">IFN-induced dsRNA-dependent serine/threonine-protein kinase that phosphorylates the alpha subunit of eukaryotic translation initiation factor 2 (EIF2S1/eIF-2-alpha) and plays a key role in the innate immune response to viral infection (PubMed:20038207, PubMed:20478537, PubMed:21123651). Inhibits viral replication via the integrated stress response (ISR): EIF2S1/eIF-2-alpha phosphorylation in response to viral infection converts EIF2S1/eIF-2-alpha in a global protein synthesis inhibitor, resulting to a shutdown of cellular and viral protein synthesis, while concomitantly initiating the preferential translation of ISR-specific mRNAs, such as the transcriptional activator ATF4 (PubMed:20631127, PubMed:21123651). Exerts its antiviral activity on a wide range of DNA and RNA viruses including west nile virus (WNV), sindbis virus (SV), foot-and-mouth virus (FMDV), semliki Forest virus (SFV) and lymphocytic choriomeningitis virus (LCMV) (PubMed:19264662, PubMed:20585572, PubMed:20631127, PubMed:21994357). Also involved in the regulation of signal transduction, apoptosis, cell proliferation and differentiation: phosphorylates other substrates including p53/TP53, PPP2R5A, DHX9, ILF3, and IRS1 (PubMed:19229320, PubMed:23403623). In addition to serine/threonine-protein kinase activity, also has tyrosine-protein kinase activity and phosphorylates CDK1 at 'Tyr-4' upon DNA damage, facilitating its ubiquitination and proteasomal degradation (By similarity). Either as an adapter protein and/or via its kinase activity, can regulate various signaling pathways (p38 MAP kinase, NF-kappa-B and insulin signaling pathways) and transcription factors (JUN, STAT1, STAT3, IRF1, ATF3) involved in the expression of genes encoding pro-inflammatory cytokines and IFNs (PubMed:22948222, PubMed:23392680). Activates the NF-kappa-B pathway via interaction with IKBKB and TRAF family of proteins and activates the p38 MAP kinase pathway via interaction with MAP2K6 (By similarity). Can act as both a positive and negative regulator of the insulin signaling pathway (ISP) (By similarity). Negatively regulates ISP by inducing the inhibitory phosphorylation of insulin receptor substrate 1 (IRS1) at 'Ser-312' and positively regulates ISP via phosphorylation of PPP2R5A which activates FOXO1, which in turn up-regulates the expression of insulin receptor substrate 2 (IRS2) (By similarity). Can regulate NLRP3 inflammasome assembly and the activation of NLRP3, NLRP1, AIM2 and NLRC4 inflammasomes (PubMed:22801494, PubMed:23401008). Plays a role in the regulation of the cytoskeleton by binding to gelsolin (GSN), sequestering the protein in an inactive conformation away from actin (PubMed:22633459).</text>
</comment>
<comment type="catalytic activity">
    <reaction>
        <text>L-seryl-[protein] + ATP = O-phospho-L-seryl-[protein] + ADP + H(+)</text>
        <dbReference type="Rhea" id="RHEA:17989"/>
        <dbReference type="Rhea" id="RHEA-COMP:9863"/>
        <dbReference type="Rhea" id="RHEA-COMP:11604"/>
        <dbReference type="ChEBI" id="CHEBI:15378"/>
        <dbReference type="ChEBI" id="CHEBI:29999"/>
        <dbReference type="ChEBI" id="CHEBI:30616"/>
        <dbReference type="ChEBI" id="CHEBI:83421"/>
        <dbReference type="ChEBI" id="CHEBI:456216"/>
        <dbReference type="EC" id="2.7.11.1"/>
    </reaction>
</comment>
<comment type="catalytic activity">
    <reaction>
        <text>L-threonyl-[protein] + ATP = O-phospho-L-threonyl-[protein] + ADP + H(+)</text>
        <dbReference type="Rhea" id="RHEA:46608"/>
        <dbReference type="Rhea" id="RHEA-COMP:11060"/>
        <dbReference type="Rhea" id="RHEA-COMP:11605"/>
        <dbReference type="ChEBI" id="CHEBI:15378"/>
        <dbReference type="ChEBI" id="CHEBI:30013"/>
        <dbReference type="ChEBI" id="CHEBI:30616"/>
        <dbReference type="ChEBI" id="CHEBI:61977"/>
        <dbReference type="ChEBI" id="CHEBI:456216"/>
        <dbReference type="EC" id="2.7.11.1"/>
    </reaction>
</comment>
<comment type="catalytic activity">
    <reaction evidence="5">
        <text>L-tyrosyl-[protein] + ATP = O-phospho-L-tyrosyl-[protein] + ADP + H(+)</text>
        <dbReference type="Rhea" id="RHEA:10596"/>
        <dbReference type="Rhea" id="RHEA-COMP:10136"/>
        <dbReference type="Rhea" id="RHEA-COMP:20101"/>
        <dbReference type="ChEBI" id="CHEBI:15378"/>
        <dbReference type="ChEBI" id="CHEBI:30616"/>
        <dbReference type="ChEBI" id="CHEBI:46858"/>
        <dbReference type="ChEBI" id="CHEBI:61978"/>
        <dbReference type="ChEBI" id="CHEBI:456216"/>
        <dbReference type="EC" id="2.7.10.2"/>
    </reaction>
</comment>
<comment type="activity regulation">
    <text evidence="2">Initially produced in an inactive form and is activated by binding to viral dsRNA, which causes dimerization and autophosphorylation in the activation loop and stimulation of function. ISGylation can activate it in the absence of viral infection. Can also be activated by heparin, pro-inflammatory stimuli, growth factors, cytokines, oxidative stress and the cellular protein PRKRA. Activity is markedly stimulated by manganese ions. Activation is blocked by the cellular proteins TARBP2, DUS2L, NPM1, NCK1 and ADAR (By similarity).</text>
</comment>
<comment type="subunit">
    <text evidence="2 7 8 9 10 18 19 20">Homodimer. Interacts with DNAJC3 and STRBP (By similarity). Forms a complex with FANCA, FANCC, FANCG and HSP70 (By similarity). Interacts with ADAR/ADAR1. The inactive form interacts with NCK1. Interacts (via the kinase catalytic domain) with STAT3 (via SH2 domain), TRAF2 (C-terminus), TRAF5 (C-terminus) and TRAF6 (C-terminus). Interacts with MAP2K6, TARBP2, NLRP1, NLRC4 and AIM2. Interacts (via DRBM 1 domain) with DUS2L (via DRBM domain) (By similarity). Interacts with DHX9 (via N-terminus) and this interaction is dependent upon activation of the kinase. The inactive form interacts with GSN. Interacts with IKBKB/IKKB, NPM1, NLRP3 and IRS1.</text>
</comment>
<comment type="interaction">
    <interactant intactId="EBI-2603444">
        <id>Q03963</id>
    </interactant>
    <interactant intactId="EBI-400825">
        <id>P35569</id>
        <label>Irs1</label>
    </interactant>
    <organismsDiffer>false</organismsDiffer>
    <experiments>2</experiments>
</comment>
<comment type="interaction">
    <interactant intactId="EBI-2603444">
        <id>Q03963</id>
    </interactant>
    <interactant intactId="EBI-6910832">
        <id>Q8R4B8</id>
        <label>Nlrp3</label>
    </interactant>
    <organismsDiffer>false</organismsDiffer>
    <experiments>3</experiments>
</comment>
<comment type="subcellular location">
    <subcellularLocation>
        <location evidence="2">Cytoplasm</location>
    </subcellularLocation>
    <subcellularLocation>
        <location evidence="2">Nucleus</location>
    </subcellularLocation>
    <subcellularLocation>
        <location evidence="2">Cytoplasm</location>
        <location evidence="2">Perinuclear region</location>
    </subcellularLocation>
</comment>
<comment type="tissue specificity">
    <text>Expressed in heart, lung, brain, kidney, testes, thymus and bone marrow.</text>
</comment>
<comment type="induction">
    <text evidence="1">By type I interferons.</text>
</comment>
<comment type="PTM">
    <text evidence="2">Autophosphorylated on several Ser, Thr and Tyr residues. Autophosphorylation of Thr-414 is dependent on Thr-409 and is stimulated by dsRNA binding and dimerization. Autophosphorylation apparently leads to the activation of the kinase. Tyrosine autophosphorylation is essential for efficient dsRNA-binding, dimerization, and kinase activation (By similarity).</text>
</comment>
<comment type="disruption phenotype">
    <text evidence="23">Mice have significantly elevated numbers of bone marrow derived hematopoietic stem/progenitor cells (HSPCs) and which are more actively proliferating and resistant to stress.</text>
</comment>
<comment type="similarity">
    <text evidence="3">Belongs to the protein kinase superfamily. Ser/Thr protein kinase family. GCN2 subfamily.</text>
</comment>
<protein>
    <recommendedName>
        <fullName>Interferon-induced, double-stranded RNA-activated protein kinase</fullName>
        <ecNumber>2.7.11.1</ecNumber>
    </recommendedName>
    <alternativeName>
        <fullName>Eukaryotic translation initiation factor 2-alpha kinase 2</fullName>
        <shortName>eIF-2A protein kinase 2</shortName>
    </alternativeName>
    <alternativeName>
        <fullName>Interferon-inducible RNA-dependent protein kinase</fullName>
    </alternativeName>
    <alternativeName>
        <fullName>P1/eIF-2A protein kinase</fullName>
    </alternativeName>
    <alternativeName>
        <fullName>Protein kinase RNA-activated</fullName>
        <shortName>PKR</shortName>
        <shortName evidence="24">Protein kinase R</shortName>
    </alternativeName>
    <alternativeName>
        <fullName>Serine/threonine-protein kinase TIK</fullName>
    </alternativeName>
    <alternativeName>
        <fullName>Tyrosine-protein kinase EIF2AK2</fullName>
        <ecNumber>2.7.10.2</ecNumber>
    </alternativeName>
    <alternativeName>
        <fullName>p68 kinase</fullName>
    </alternativeName>
</protein>
<reference key="1">
    <citation type="journal article" date="1991" name="J. Biol. Chem.">
        <title>TIK, a novel serine/threonine kinase, is recognized by antibodies directed against phosphotyrosine.</title>
        <authorList>
            <person name="Icely P.L."/>
            <person name="Gros P."/>
            <person name="Bergeron J.J.M."/>
            <person name="Devault A."/>
            <person name="Afar D.E.H."/>
            <person name="Bell J.C."/>
        </authorList>
    </citation>
    <scope>NUCLEOTIDE SEQUENCE [MRNA]</scope>
</reference>
<reference key="2">
    <citation type="journal article" date="1992" name="Proc. Natl. Acad. Sci. U.S.A.">
        <title>Identification of double-stranded RNA-binding domains in the interferon-induced double-stranded RNA-activated p68 kinase.</title>
        <authorList>
            <person name="Feng G.S."/>
            <person name="Chong K."/>
            <person name="Kumar A."/>
            <person name="Williams B.R.G."/>
        </authorList>
    </citation>
    <scope>NUCLEOTIDE SEQUENCE [MRNA]</scope>
    <source>
        <tissue>Mammary carcinoma</tissue>
    </source>
</reference>
<reference key="3">
    <citation type="journal article" date="1994" name="Proc. Natl. Acad. Sci. U.S.A.">
        <title>Mechanism of interferon action: structure of the mouse PKR gene encoding the interferon-inducible RNA-dependent protein kinase.</title>
        <authorList>
            <person name="Tanaka H."/>
            <person name="Samuel C.E."/>
        </authorList>
    </citation>
    <scope>NUCLEOTIDE SEQUENCE [GENOMIC DNA]</scope>
    <source>
        <strain>DBA/2J</strain>
        <tissue>Liver</tissue>
    </source>
</reference>
<reference key="4">
    <citation type="journal article" date="1995" name="Gene">
        <title>Sequence of the murine interferon-inducible RNA-dependent protein kinase (PKR) deduced from genomic clones.</title>
        <authorList>
            <person name="Tanaka H."/>
            <person name="Samuel C.E."/>
        </authorList>
    </citation>
    <scope>NUCLEOTIDE SEQUENCE [GENOMIC DNA]</scope>
    <source>
        <strain>DBA/2J</strain>
        <tissue>Liver</tissue>
    </source>
</reference>
<reference key="5">
    <citation type="journal article" date="2005" name="Science">
        <title>The transcriptional landscape of the mammalian genome.</title>
        <authorList>
            <person name="Carninci P."/>
            <person name="Kasukawa T."/>
            <person name="Katayama S."/>
            <person name="Gough J."/>
            <person name="Frith M.C."/>
            <person name="Maeda N."/>
            <person name="Oyama R."/>
            <person name="Ravasi T."/>
            <person name="Lenhard B."/>
            <person name="Wells C."/>
            <person name="Kodzius R."/>
            <person name="Shimokawa K."/>
            <person name="Bajic V.B."/>
            <person name="Brenner S.E."/>
            <person name="Batalov S."/>
            <person name="Forrest A.R."/>
            <person name="Zavolan M."/>
            <person name="Davis M.J."/>
            <person name="Wilming L.G."/>
            <person name="Aidinis V."/>
            <person name="Allen J.E."/>
            <person name="Ambesi-Impiombato A."/>
            <person name="Apweiler R."/>
            <person name="Aturaliya R.N."/>
            <person name="Bailey T.L."/>
            <person name="Bansal M."/>
            <person name="Baxter L."/>
            <person name="Beisel K.W."/>
            <person name="Bersano T."/>
            <person name="Bono H."/>
            <person name="Chalk A.M."/>
            <person name="Chiu K.P."/>
            <person name="Choudhary V."/>
            <person name="Christoffels A."/>
            <person name="Clutterbuck D.R."/>
            <person name="Crowe M.L."/>
            <person name="Dalla E."/>
            <person name="Dalrymple B.P."/>
            <person name="de Bono B."/>
            <person name="Della Gatta G."/>
            <person name="di Bernardo D."/>
            <person name="Down T."/>
            <person name="Engstrom P."/>
            <person name="Fagiolini M."/>
            <person name="Faulkner G."/>
            <person name="Fletcher C.F."/>
            <person name="Fukushima T."/>
            <person name="Furuno M."/>
            <person name="Futaki S."/>
            <person name="Gariboldi M."/>
            <person name="Georgii-Hemming P."/>
            <person name="Gingeras T.R."/>
            <person name="Gojobori T."/>
            <person name="Green R.E."/>
            <person name="Gustincich S."/>
            <person name="Harbers M."/>
            <person name="Hayashi Y."/>
            <person name="Hensch T.K."/>
            <person name="Hirokawa N."/>
            <person name="Hill D."/>
            <person name="Huminiecki L."/>
            <person name="Iacono M."/>
            <person name="Ikeo K."/>
            <person name="Iwama A."/>
            <person name="Ishikawa T."/>
            <person name="Jakt M."/>
            <person name="Kanapin A."/>
            <person name="Katoh M."/>
            <person name="Kawasawa Y."/>
            <person name="Kelso J."/>
            <person name="Kitamura H."/>
            <person name="Kitano H."/>
            <person name="Kollias G."/>
            <person name="Krishnan S.P."/>
            <person name="Kruger A."/>
            <person name="Kummerfeld S.K."/>
            <person name="Kurochkin I.V."/>
            <person name="Lareau L.F."/>
            <person name="Lazarevic D."/>
            <person name="Lipovich L."/>
            <person name="Liu J."/>
            <person name="Liuni S."/>
            <person name="McWilliam S."/>
            <person name="Madan Babu M."/>
            <person name="Madera M."/>
            <person name="Marchionni L."/>
            <person name="Matsuda H."/>
            <person name="Matsuzawa S."/>
            <person name="Miki H."/>
            <person name="Mignone F."/>
            <person name="Miyake S."/>
            <person name="Morris K."/>
            <person name="Mottagui-Tabar S."/>
            <person name="Mulder N."/>
            <person name="Nakano N."/>
            <person name="Nakauchi H."/>
            <person name="Ng P."/>
            <person name="Nilsson R."/>
            <person name="Nishiguchi S."/>
            <person name="Nishikawa S."/>
            <person name="Nori F."/>
            <person name="Ohara O."/>
            <person name="Okazaki Y."/>
            <person name="Orlando V."/>
            <person name="Pang K.C."/>
            <person name="Pavan W.J."/>
            <person name="Pavesi G."/>
            <person name="Pesole G."/>
            <person name="Petrovsky N."/>
            <person name="Piazza S."/>
            <person name="Reed J."/>
            <person name="Reid J.F."/>
            <person name="Ring B.Z."/>
            <person name="Ringwald M."/>
            <person name="Rost B."/>
            <person name="Ruan Y."/>
            <person name="Salzberg S.L."/>
            <person name="Sandelin A."/>
            <person name="Schneider C."/>
            <person name="Schoenbach C."/>
            <person name="Sekiguchi K."/>
            <person name="Semple C.A."/>
            <person name="Seno S."/>
            <person name="Sessa L."/>
            <person name="Sheng Y."/>
            <person name="Shibata Y."/>
            <person name="Shimada H."/>
            <person name="Shimada K."/>
            <person name="Silva D."/>
            <person name="Sinclair B."/>
            <person name="Sperling S."/>
            <person name="Stupka E."/>
            <person name="Sugiura K."/>
            <person name="Sultana R."/>
            <person name="Takenaka Y."/>
            <person name="Taki K."/>
            <person name="Tammoja K."/>
            <person name="Tan S.L."/>
            <person name="Tang S."/>
            <person name="Taylor M.S."/>
            <person name="Tegner J."/>
            <person name="Teichmann S.A."/>
            <person name="Ueda H.R."/>
            <person name="van Nimwegen E."/>
            <person name="Verardo R."/>
            <person name="Wei C.L."/>
            <person name="Yagi K."/>
            <person name="Yamanishi H."/>
            <person name="Zabarovsky E."/>
            <person name="Zhu S."/>
            <person name="Zimmer A."/>
            <person name="Hide W."/>
            <person name="Bult C."/>
            <person name="Grimmond S.M."/>
            <person name="Teasdale R.D."/>
            <person name="Liu E.T."/>
            <person name="Brusic V."/>
            <person name="Quackenbush J."/>
            <person name="Wahlestedt C."/>
            <person name="Mattick J.S."/>
            <person name="Hume D.A."/>
            <person name="Kai C."/>
            <person name="Sasaki D."/>
            <person name="Tomaru Y."/>
            <person name="Fukuda S."/>
            <person name="Kanamori-Katayama M."/>
            <person name="Suzuki M."/>
            <person name="Aoki J."/>
            <person name="Arakawa T."/>
            <person name="Iida J."/>
            <person name="Imamura K."/>
            <person name="Itoh M."/>
            <person name="Kato T."/>
            <person name="Kawaji H."/>
            <person name="Kawagashira N."/>
            <person name="Kawashima T."/>
            <person name="Kojima M."/>
            <person name="Kondo S."/>
            <person name="Konno H."/>
            <person name="Nakano K."/>
            <person name="Ninomiya N."/>
            <person name="Nishio T."/>
            <person name="Okada M."/>
            <person name="Plessy C."/>
            <person name="Shibata K."/>
            <person name="Shiraki T."/>
            <person name="Suzuki S."/>
            <person name="Tagami M."/>
            <person name="Waki K."/>
            <person name="Watahiki A."/>
            <person name="Okamura-Oho Y."/>
            <person name="Suzuki H."/>
            <person name="Kawai J."/>
            <person name="Hayashizaki Y."/>
        </authorList>
    </citation>
    <scope>NUCLEOTIDE SEQUENCE [LARGE SCALE MRNA]</scope>
    <source>
        <strain>C57BL/6J</strain>
        <tissue>Skin</tissue>
    </source>
</reference>
<reference key="6">
    <citation type="journal article" date="2000" name="Mol. Cell. Biol.">
        <title>PKR stimulates NF-kappaB irrespective of its kinase function by interacting with the IkappaB kinase complex.</title>
        <authorList>
            <person name="Bonnet M.C."/>
            <person name="Weil R."/>
            <person name="Dam E."/>
            <person name="Hovanessian A.G."/>
            <person name="Meurs E.F."/>
        </authorList>
    </citation>
    <scope>INTERACTION WITH IKBKB</scope>
</reference>
<reference key="7">
    <citation type="journal article" date="2003" name="J. Biol. Chem.">
        <title>Nucleophosmin interacts with and inhibits the catalytic function of eukaryotic initiation factor 2 kinase PKR.</title>
        <authorList>
            <person name="Pang Q."/>
            <person name="Christianson T.A."/>
            <person name="Koretsky T."/>
            <person name="Carlson H."/>
            <person name="David L."/>
            <person name="Keeble W."/>
            <person name="Faulkner G.R."/>
            <person name="Speckhart A."/>
            <person name="Bagby G.C."/>
        </authorList>
    </citation>
    <scope>INTERACTION WITH NPM1</scope>
</reference>
<reference key="8">
    <citation type="journal article" date="2007" name="J. Virol.">
        <title>Double-stranded RNA deaminase ADAR1 increases host susceptibility to virus infection.</title>
        <authorList>
            <person name="Nie Y."/>
            <person name="Hammond G.L."/>
            <person name="Yang J.H."/>
        </authorList>
    </citation>
    <scope>INTERACTION WITH ADAR</scope>
</reference>
<reference key="9">
    <citation type="journal article" date="2009" name="J. Gen. Virol.">
        <title>PKR acts early in infection to suppress Semliki Forest virus production and strongly enhances the type I interferon response.</title>
        <authorList>
            <person name="Barry G."/>
            <person name="Breakwell L."/>
            <person name="Fragkoudis R."/>
            <person name="Attarzadeh-Yazdi G."/>
            <person name="Rodriguez-Andres J."/>
            <person name="Kohl A."/>
            <person name="Fazakerley J.K."/>
        </authorList>
    </citation>
    <scope>FUNCTION IN SFV RESTRICTION</scope>
</reference>
<reference key="10">
    <citation type="journal article" date="2009" name="PLoS Pathog.">
        <title>An antiviral response directed by PKR phosphorylation of the RNA helicase A.</title>
        <authorList>
            <person name="Sadler A.J."/>
            <person name="Latchoumanin O."/>
            <person name="Hawkes D."/>
            <person name="Mak J."/>
            <person name="Williams B.R."/>
        </authorList>
    </citation>
    <scope>FUNCTION</scope>
    <scope>INTERACTION WITH DHX9</scope>
</reference>
<reference key="11">
    <citation type="journal article" date="2010" name="Cell">
        <title>A tissue-specific atlas of mouse protein phosphorylation and expression.</title>
        <authorList>
            <person name="Huttlin E.L."/>
            <person name="Jedrychowski M.P."/>
            <person name="Elias J.E."/>
            <person name="Goswami T."/>
            <person name="Rad R."/>
            <person name="Beausoleil S.A."/>
            <person name="Villen J."/>
            <person name="Haas W."/>
            <person name="Sowa M.E."/>
            <person name="Gygi S.P."/>
        </authorList>
    </citation>
    <scope>IDENTIFICATION BY MASS SPECTROMETRY [LARGE SCALE ANALYSIS]</scope>
    <source>
        <tissue>Brown adipose tissue</tissue>
        <tissue>Lung</tissue>
        <tissue>Spleen</tissue>
    </source>
</reference>
<reference key="12">
    <citation type="journal article" date="2010" name="Cell Host Microbe">
        <title>Protein kinase R contributes to immunity against specific viruses by regulating interferon mRNA integrity.</title>
        <authorList>
            <person name="Schulz O."/>
            <person name="Pichlmair A."/>
            <person name="Rehwinkel J."/>
            <person name="Rogers N.C."/>
            <person name="Scheuner D."/>
            <person name="Kato H."/>
            <person name="Takeuchi O."/>
            <person name="Akira S."/>
            <person name="Kaufman R.J."/>
            <person name="Reis e Sousa C."/>
        </authorList>
    </citation>
    <scope>FUNCTION</scope>
</reference>
<reference key="13">
    <citation type="journal article" date="2010" name="Genes Dev.">
        <title>Phosphorylation of the NFAR proteins by the dsRNA-dependent protein kinase PKR constitutes a novel mechanism of translational regulation and cellular defense.</title>
        <authorList>
            <person name="Harashima A."/>
            <person name="Guettouche T."/>
            <person name="Barber G.N."/>
        </authorList>
    </citation>
    <scope>FUNCTION</scope>
</reference>
<reference key="14">
    <citation type="journal article" date="2010" name="J. Interferon Cytokine Res.">
        <title>Double-stranded RNA-activated protein kinase regulates early innate immune responses during respiratory syncytial virus infection.</title>
        <authorList>
            <person name="Minor R.A."/>
            <person name="Limmon G.V."/>
            <person name="Miller-DeGraff L."/>
            <person name="Dixon D."/>
            <person name="Andrews D.M."/>
            <person name="Kaufman R.J."/>
            <person name="Imani F."/>
        </authorList>
    </citation>
    <scope>FUNCTION</scope>
</reference>
<reference key="15">
    <citation type="journal article" date="2010" name="J. Virol.">
        <title>Protein kinase R is responsible for the phosphorylation of eIF2alpha in rotavirus infection.</title>
        <authorList>
            <person name="Rojas M."/>
            <person name="Arias C.F."/>
            <person name="Lopez S."/>
        </authorList>
    </citation>
    <scope>FUNCTION</scope>
</reference>
<reference key="16">
    <citation type="journal article" date="2010" name="PLoS Pathog.">
        <title>Role of PKR and Type I IFNs in viral control during primary and secondary infection.</title>
        <authorList>
            <person name="Nakayama Y."/>
            <person name="Plisch E.H."/>
            <person name="Sullivan J."/>
            <person name="Thomas C."/>
            <person name="Czuprynski C.J."/>
            <person name="Williams B.R."/>
            <person name="Suresh M."/>
        </authorList>
    </citation>
    <scope>FUNCTION IN LCMV RESTRICTION</scope>
</reference>
<reference key="17">
    <citation type="journal article" date="2011" name="Clin. Vaccine Immunol.">
        <title>Protein kinase R is a novel mediator of CD40 signaling and plays a critical role in modulating immunoglobulin expression during respiratory syncytial virus infection.</title>
        <authorList>
            <person name="Thakur S.A."/>
            <person name="Zalinger Z.B."/>
            <person name="Johnson T.R."/>
            <person name="Imani F."/>
        </authorList>
    </citation>
    <scope>FUNCTION</scope>
</reference>
<reference key="18">
    <citation type="journal article" date="2011" name="J. Hepatol.">
        <title>Novel insights in the interplay between inflammation and metabolic diseases: a role for the pathogen sensing kinase PKR.</title>
        <authorList>
            <person name="Marsollier N."/>
            <person name="Ferre P."/>
            <person name="Foufelle F."/>
        </authorList>
    </citation>
    <scope>REVIEW</scope>
</reference>
<reference key="19">
    <citation type="journal article" date="2012" name="Endocrinology">
        <title>Double-stranded RNA-activated protein kinase is a key modulator of insulin sensitivity in physiological conditions and in obesity in mice.</title>
        <authorList>
            <person name="Carvalho-Filho M.A."/>
            <person name="Carvalho B.M."/>
            <person name="Oliveira A.G."/>
            <person name="Guadagnini D."/>
            <person name="Ueno M."/>
            <person name="Dias M.M."/>
            <person name="Tsukumo D.M."/>
            <person name="Hirabara S.M."/>
            <person name="Reis L.F."/>
            <person name="Curi R."/>
            <person name="Carvalheira J.B."/>
            <person name="Saad M.J."/>
        </authorList>
    </citation>
    <scope>FUNCTION</scope>
    <scope>INTERACTION WITH IRS1</scope>
</reference>
<reference key="20">
    <citation type="journal article" date="2012" name="Immunity">
        <title>Regulation of actin dynamics by protein kinase R control of gelsolin enforces basal innate immune defense.</title>
        <authorList>
            <person name="Irving A.T."/>
            <person name="Wang D."/>
            <person name="Vasilevski O."/>
            <person name="Latchoumanin O."/>
            <person name="Kozer N."/>
            <person name="Clayton A.H."/>
            <person name="Szczepny A."/>
            <person name="Morimoto H."/>
            <person name="Xu D."/>
            <person name="Williams B.R."/>
            <person name="Sadler A.J."/>
        </authorList>
    </citation>
    <scope>FUNCTION</scope>
    <scope>INTERACTION WITH GSN</scope>
</reference>
<reference key="21">
    <citation type="journal article" date="2012" name="Nature">
        <title>Novel role of PKR in inflammasome activation and HMGB1 release.</title>
        <authorList>
            <person name="Lu B."/>
            <person name="Nakamura T."/>
            <person name="Inouye K."/>
            <person name="Li J."/>
            <person name="Tang Y."/>
            <person name="Lundbaeck P."/>
            <person name="Valdes-Ferrer S.I."/>
            <person name="Olofsson P.S."/>
            <person name="Kalb T."/>
            <person name="Roth J."/>
            <person name="Zou Y."/>
            <person name="Erlandsson-Harris H."/>
            <person name="Yang H."/>
            <person name="Ting J.P."/>
            <person name="Wang H."/>
            <person name="Andersson U."/>
            <person name="Antoine D.J."/>
            <person name="Chavan S.S."/>
            <person name="Hotamisligil G.S."/>
            <person name="Tracey K.J."/>
        </authorList>
    </citation>
    <scope>FUNCTION</scope>
    <scope>INTERACTION WITH NLRP3</scope>
    <scope>AUTOPHOSPHORYLATION</scope>
</reference>
<reference key="22">
    <citation type="journal article" date="2013" name="Blood">
        <title>PKR regulates proliferation, differentiation and survival of murine hematopoietic stem/progenitor cells.</title>
        <authorList>
            <person name="Liu X."/>
            <person name="Bennett R.L."/>
            <person name="Cheng X."/>
            <person name="Byrne M."/>
            <person name="Reinhard M.K."/>
            <person name="May W.S. Jr."/>
        </authorList>
    </citation>
    <scope>FUNCTION</scope>
    <scope>DISRUPTION PHENOTYPE</scope>
</reference>
<reference key="23">
    <citation type="journal article" date="2013" name="Eur. J. Immunol.">
        <title>The protein kinase PKR is critical for LPS-induced iNOS production but dispensable for inflammasome activation in macrophages.</title>
        <authorList>
            <person name="He Y."/>
            <person name="Franchi L."/>
            <person name="Nunez G."/>
        </authorList>
    </citation>
    <scope>FUNCTION</scope>
</reference>
<reference key="24">
    <citation type="journal article" date="2013" name="J. Biol. Chem.">
        <title>Activation of double-stranded RNA-activated protein kinase (PKR) by interferon-stimulated gene 15 (ISG15) modification down-regulates protein translation.</title>
        <authorList>
            <person name="Okumura F."/>
            <person name="Okumura A.J."/>
            <person name="Uematsu K."/>
            <person name="Hatakeyama S."/>
            <person name="Zhang D.E."/>
            <person name="Kamura T."/>
        </authorList>
    </citation>
    <scope>ISGYLATION</scope>
</reference>
<reference key="25">
    <citation type="journal article" date="2013" name="J. Neurosci.">
        <title>Blocking the eIF2? kinase (PKR) enhances positive and negative forms of cortex-dependent taste memory.</title>
        <authorList>
            <person name="Stern E."/>
            <person name="Chinnakkaruppan A."/>
            <person name="David O."/>
            <person name="Sonenberg N."/>
            <person name="Rosenblum K."/>
        </authorList>
    </citation>
    <scope>FUNCTION</scope>
</reference>
<reference key="26">
    <citation type="submission" date="2005-11" db="PDB data bank">
        <title>Solution structure of the first and second DSRM domain in interferon-induced, double-stranded RNA-activated protein kinase.</title>
        <authorList>
            <consortium name="RIKEN structural genomics initiative (RSGI)"/>
        </authorList>
    </citation>
    <scope>STRUCTURE BY NMR OF 1-171</scope>
</reference>
<feature type="initiator methionine" description="Removed" evidence="2">
    <location>
        <position position="1"/>
    </location>
</feature>
<feature type="chain" id="PRO_0000085946" description="Interferon-induced, double-stranded RNA-activated protein kinase">
    <location>
        <begin position="2"/>
        <end position="515"/>
    </location>
</feature>
<feature type="domain" description="DRBM 1" evidence="4">
    <location>
        <begin position="8"/>
        <end position="76"/>
    </location>
</feature>
<feature type="domain" description="DRBM 2" evidence="4">
    <location>
        <begin position="95"/>
        <end position="162"/>
    </location>
</feature>
<feature type="domain" description="Protein kinase" evidence="3">
    <location>
        <begin position="242"/>
        <end position="504"/>
    </location>
</feature>
<feature type="region of interest" description="Disordered" evidence="6">
    <location>
        <begin position="204"/>
        <end position="224"/>
    </location>
</feature>
<feature type="region of interest" description="Interaction with TRAF5" evidence="2">
    <location>
        <begin position="241"/>
        <end position="515"/>
    </location>
</feature>
<feature type="active site" description="Proton acceptor" evidence="3 5">
    <location>
        <position position="376"/>
    </location>
</feature>
<feature type="binding site" evidence="3">
    <location>
        <begin position="248"/>
        <end position="256"/>
    </location>
    <ligand>
        <name>ATP</name>
        <dbReference type="ChEBI" id="CHEBI:30616"/>
    </ligand>
</feature>
<feature type="binding site" evidence="3">
    <location>
        <position position="271"/>
    </location>
    <ligand>
        <name>ATP</name>
        <dbReference type="ChEBI" id="CHEBI:30616"/>
    </ligand>
</feature>
<feature type="modified residue" description="N-acetylalanine" evidence="2">
    <location>
        <position position="2"/>
    </location>
</feature>
<feature type="modified residue" description="Phosphothreonine" evidence="2">
    <location>
        <position position="84"/>
    </location>
</feature>
<feature type="modified residue" description="Phosphotyrosine; by autocatalysis" evidence="2">
    <location>
        <position position="96"/>
    </location>
</feature>
<feature type="modified residue" description="Phosphotyrosine; by autocatalysis" evidence="2">
    <location>
        <position position="157"/>
    </location>
</feature>
<feature type="modified residue" description="Phosphothreonine" evidence="2">
    <location>
        <position position="233"/>
    </location>
</feature>
<feature type="modified residue" description="Phosphotyrosine; by autocatalysis" evidence="2">
    <location>
        <position position="268"/>
    </location>
</feature>
<feature type="modified residue" description="Phosphothreonine; by autocatalysis" evidence="2">
    <location>
        <position position="409"/>
    </location>
</feature>
<feature type="modified residue" description="Phosphothreonine; by autocatalysis" evidence="2">
    <location>
        <position position="414"/>
    </location>
</feature>
<feature type="modified residue" description="Phosphoserine" evidence="2">
    <location>
        <position position="419"/>
    </location>
</feature>
<feature type="cross-link" description="Glycyl lysine isopeptide (Lys-Gly) (interchain with G-Cter in ISG15)" evidence="2">
    <location>
        <position position="68"/>
    </location>
</feature>
<feature type="cross-link" description="Glycyl lysine isopeptide (Lys-Gly) (interchain with G-Cter in ISG15)" evidence="2">
    <location>
        <position position="154"/>
    </location>
</feature>
<feature type="sequence conflict" description="In Ref. 1; AAA40150." evidence="25" ref="1">
    <original>P</original>
    <variation>G</variation>
    <location>
        <position position="52"/>
    </location>
</feature>
<feature type="sequence conflict" description="In Ref. 1; AAA40150." evidence="25" ref="1">
    <original>Q</original>
    <variation>T</variation>
    <location>
        <position position="60"/>
    </location>
</feature>
<feature type="sequence conflict" description="In Ref. 1; AAA40150." evidence="25" ref="1">
    <original>S</original>
    <variation>C</variation>
    <location>
        <position position="87"/>
    </location>
</feature>
<feature type="sequence conflict" description="In Ref. 2; AAA39885." evidence="25" ref="2">
    <original>T</original>
    <variation>I</variation>
    <location>
        <position position="144"/>
    </location>
</feature>
<feature type="sequence conflict" description="In Ref. 2; AAA39885." evidence="25" ref="2">
    <original>EH</original>
    <variation>DR</variation>
    <location>
        <begin position="281"/>
        <end position="282"/>
    </location>
</feature>
<feature type="sequence conflict" description="In Ref. 1; AAA40150." evidence="25" ref="1">
    <original>K</original>
    <variation>E</variation>
    <location>
        <position position="510"/>
    </location>
</feature>
<feature type="sequence conflict" description="In Ref. 1; AAA40150." evidence="25" ref="1">
    <original>RNTC</original>
    <variation>KHMLGPF</variation>
    <location>
        <begin position="512"/>
        <end position="515"/>
    </location>
</feature>
<feature type="helix" evidence="27">
    <location>
        <begin position="8"/>
        <end position="20"/>
    </location>
</feature>
<feature type="strand" evidence="27">
    <location>
        <begin position="24"/>
        <end position="33"/>
    </location>
</feature>
<feature type="strand" evidence="27">
    <location>
        <begin position="35"/>
        <end position="37"/>
    </location>
</feature>
<feature type="strand" evidence="27">
    <location>
        <begin position="39"/>
        <end position="48"/>
    </location>
</feature>
<feature type="strand" evidence="27">
    <location>
        <begin position="54"/>
        <end position="58"/>
    </location>
</feature>
<feature type="helix" evidence="27">
    <location>
        <begin position="59"/>
        <end position="74"/>
    </location>
</feature>
<feature type="helix" evidence="26">
    <location>
        <begin position="96"/>
        <end position="106"/>
    </location>
</feature>
<feature type="strand" evidence="26">
    <location>
        <begin position="111"/>
        <end position="115"/>
    </location>
</feature>
<feature type="strand" evidence="26">
    <location>
        <begin position="119"/>
        <end position="123"/>
    </location>
</feature>
<feature type="strand" evidence="26">
    <location>
        <begin position="126"/>
        <end position="134"/>
    </location>
</feature>
<feature type="strand" evidence="26">
    <location>
        <begin position="136"/>
        <end position="144"/>
    </location>
</feature>
<feature type="helix" evidence="26">
    <location>
        <begin position="145"/>
        <end position="162"/>
    </location>
</feature>
<proteinExistence type="evidence at protein level"/>
<name>E2AK2_MOUSE</name>
<keyword id="KW-0002">3D-structure</keyword>
<keyword id="KW-0007">Acetylation</keyword>
<keyword id="KW-0051">Antiviral defense</keyword>
<keyword id="KW-0067">ATP-binding</keyword>
<keyword id="KW-0963">Cytoplasm</keyword>
<keyword id="KW-0391">Immunity</keyword>
<keyword id="KW-0399">Innate immunity</keyword>
<keyword id="KW-1017">Isopeptide bond</keyword>
<keyword id="KW-0418">Kinase</keyword>
<keyword id="KW-0547">Nucleotide-binding</keyword>
<keyword id="KW-0539">Nucleus</keyword>
<keyword id="KW-0597">Phosphoprotein</keyword>
<keyword id="KW-1185">Reference proteome</keyword>
<keyword id="KW-0677">Repeat</keyword>
<keyword id="KW-0694">RNA-binding</keyword>
<keyword id="KW-0723">Serine/threonine-protein kinase</keyword>
<keyword id="KW-0804">Transcription</keyword>
<keyword id="KW-0805">Transcription regulation</keyword>
<keyword id="KW-0808">Transferase</keyword>
<keyword id="KW-0829">Tyrosine-protein kinase</keyword>
<keyword id="KW-0832">Ubl conjugation</keyword>
<sequence>MASDTPGFYMDKLNKYRQMHGVAITYKELSTSGPPHDRRFTFQVLIDEKEFPEAKGRSKQEARNAAAKLAVDILDNENKVDCHTSASEQGLFVGNYIGLVNSFAQKKKLSVNYEQCEPNSELPQRFICKCKIGQTMYGTGSGVTKQEAKQLAAKEAYQKLLKSPPKTAGTSSSVVTSTFSGFSSSSSMTSNGVSQSAPGSFSSENVFTNGLGENKRKSGVKVSPDDVQRNKYTLDARFNSDFEDIEEIGLGGFGQVFKAKHRIDGKRYAIKRVKYNTEKAEHEVQALAELNHVNIVQYHSCWEGVDYDPEHSMSDTSRYKTRCLFIQMEFCDKGTLEQWMRNRNQSKVDKALILDLYEQIVTGVEYIHSKGLIHRDLKPGNIFLVDERHIKIGDFGLATALENDGKSRTRRTGTLQYMSPEQLFLKHYGKEVDIFALGLILAELLHTCFTESEKIKFFESLRKGDFSNDIFDNKEKSLLKKLLSEKPKDRPETSEILKTLAEWRNISEKKKRNTC</sequence>
<accession>Q03963</accession>
<accession>Q61742</accession>
<accession>Q62026</accession>
<gene>
    <name type="primary">Eif2ak2</name>
    <name type="synonym">Pkr</name>
    <name type="synonym">Prkr</name>
    <name type="synonym">Tik</name>
</gene>
<dbReference type="EC" id="2.7.11.1"/>
<dbReference type="EC" id="2.7.10.2"/>
<dbReference type="EMBL" id="M65029">
    <property type="protein sequence ID" value="AAA40150.1"/>
    <property type="molecule type" value="mRNA"/>
</dbReference>
<dbReference type="EMBL" id="M93567">
    <property type="protein sequence ID" value="AAA39885.1"/>
    <property type="molecule type" value="mRNA"/>
</dbReference>
<dbReference type="EMBL" id="U09928">
    <property type="protein sequence ID" value="AAC24729.1"/>
    <property type="molecule type" value="Genomic_DNA"/>
</dbReference>
<dbReference type="EMBL" id="U09914">
    <property type="protein sequence ID" value="AAC24729.1"/>
    <property type="status" value="JOINED"/>
    <property type="molecule type" value="Genomic_DNA"/>
</dbReference>
<dbReference type="EMBL" id="U09915">
    <property type="protein sequence ID" value="AAC24729.1"/>
    <property type="status" value="JOINED"/>
    <property type="molecule type" value="Genomic_DNA"/>
</dbReference>
<dbReference type="EMBL" id="U09916">
    <property type="protein sequence ID" value="AAC24729.1"/>
    <property type="status" value="JOINED"/>
    <property type="molecule type" value="Genomic_DNA"/>
</dbReference>
<dbReference type="EMBL" id="U09917">
    <property type="protein sequence ID" value="AAC24729.1"/>
    <property type="status" value="JOINED"/>
    <property type="molecule type" value="Genomic_DNA"/>
</dbReference>
<dbReference type="EMBL" id="U09918">
    <property type="protein sequence ID" value="AAC24729.1"/>
    <property type="status" value="JOINED"/>
    <property type="molecule type" value="Genomic_DNA"/>
</dbReference>
<dbReference type="EMBL" id="U09919">
    <property type="protein sequence ID" value="AAC24729.1"/>
    <property type="status" value="JOINED"/>
    <property type="molecule type" value="Genomic_DNA"/>
</dbReference>
<dbReference type="EMBL" id="U09920">
    <property type="protein sequence ID" value="AAC24729.1"/>
    <property type="status" value="JOINED"/>
    <property type="molecule type" value="Genomic_DNA"/>
</dbReference>
<dbReference type="EMBL" id="U09921">
    <property type="protein sequence ID" value="AAC24729.1"/>
    <property type="status" value="JOINED"/>
    <property type="molecule type" value="Genomic_DNA"/>
</dbReference>
<dbReference type="EMBL" id="U09922">
    <property type="protein sequence ID" value="AAC24729.1"/>
    <property type="status" value="JOINED"/>
    <property type="molecule type" value="Genomic_DNA"/>
</dbReference>
<dbReference type="EMBL" id="U09923">
    <property type="protein sequence ID" value="AAC24729.1"/>
    <property type="status" value="JOINED"/>
    <property type="molecule type" value="Genomic_DNA"/>
</dbReference>
<dbReference type="EMBL" id="U09924">
    <property type="protein sequence ID" value="AAC24729.1"/>
    <property type="status" value="JOINED"/>
    <property type="molecule type" value="Genomic_DNA"/>
</dbReference>
<dbReference type="EMBL" id="U09925">
    <property type="protein sequence ID" value="AAC24729.1"/>
    <property type="status" value="JOINED"/>
    <property type="molecule type" value="Genomic_DNA"/>
</dbReference>
<dbReference type="EMBL" id="U09926">
    <property type="protein sequence ID" value="AAC24729.1"/>
    <property type="status" value="JOINED"/>
    <property type="molecule type" value="Genomic_DNA"/>
</dbReference>
<dbReference type="EMBL" id="U09927">
    <property type="protein sequence ID" value="AAC24729.1"/>
    <property type="status" value="JOINED"/>
    <property type="molecule type" value="Genomic_DNA"/>
</dbReference>
<dbReference type="EMBL" id="AK028602">
    <property type="protein sequence ID" value="BAC26027.1"/>
    <property type="molecule type" value="mRNA"/>
</dbReference>
<dbReference type="CCDS" id="CCDS28980.1"/>
<dbReference type="PIR" id="A59309">
    <property type="entry name" value="A59309"/>
</dbReference>
<dbReference type="RefSeq" id="NP_035293.1">
    <property type="nucleotide sequence ID" value="NM_011163.4"/>
</dbReference>
<dbReference type="PDB" id="1X48">
    <property type="method" value="NMR"/>
    <property type="chains" value="A=96-170"/>
</dbReference>
<dbReference type="PDB" id="1X49">
    <property type="method" value="NMR"/>
    <property type="chains" value="A=1-84"/>
</dbReference>
<dbReference type="PDBsum" id="1X48"/>
<dbReference type="PDBsum" id="1X49"/>
<dbReference type="SMR" id="Q03963"/>
<dbReference type="BioGRID" id="202376">
    <property type="interactions" value="15"/>
</dbReference>
<dbReference type="DIP" id="DIP-41411N"/>
<dbReference type="FunCoup" id="Q03963">
    <property type="interactions" value="1958"/>
</dbReference>
<dbReference type="IntAct" id="Q03963">
    <property type="interactions" value="4"/>
</dbReference>
<dbReference type="STRING" id="10090.ENSMUSP00000024884"/>
<dbReference type="ChEMBL" id="CHEMBL1795121"/>
<dbReference type="GlyGen" id="Q03963">
    <property type="glycosylation" value="1 site, 1 O-linked glycan (1 site)"/>
</dbReference>
<dbReference type="iPTMnet" id="Q03963"/>
<dbReference type="PhosphoSitePlus" id="Q03963"/>
<dbReference type="SwissPalm" id="Q03963"/>
<dbReference type="jPOST" id="Q03963"/>
<dbReference type="PaxDb" id="10090-ENSMUSP00000024884"/>
<dbReference type="PeptideAtlas" id="Q03963"/>
<dbReference type="ProteomicsDB" id="275423"/>
<dbReference type="Pumba" id="Q03963"/>
<dbReference type="Antibodypedia" id="3548">
    <property type="antibodies" value="1189 antibodies from 43 providers"/>
</dbReference>
<dbReference type="DNASU" id="19106"/>
<dbReference type="Ensembl" id="ENSMUST00000024884.5">
    <property type="protein sequence ID" value="ENSMUSP00000024884.5"/>
    <property type="gene ID" value="ENSMUSG00000024079.5"/>
</dbReference>
<dbReference type="GeneID" id="19106"/>
<dbReference type="KEGG" id="mmu:19106"/>
<dbReference type="UCSC" id="uc008dph.2">
    <property type="organism name" value="mouse"/>
</dbReference>
<dbReference type="AGR" id="MGI:1353449"/>
<dbReference type="CTD" id="5610"/>
<dbReference type="MGI" id="MGI:1353449">
    <property type="gene designation" value="Eif2ak2"/>
</dbReference>
<dbReference type="VEuPathDB" id="HostDB:ENSMUSG00000024079"/>
<dbReference type="eggNOG" id="KOG1033">
    <property type="taxonomic scope" value="Eukaryota"/>
</dbReference>
<dbReference type="GeneTree" id="ENSGT00940000160736"/>
<dbReference type="HOGENOM" id="CLU_023682_1_0_1"/>
<dbReference type="InParanoid" id="Q03963"/>
<dbReference type="OMA" id="KIACEMM"/>
<dbReference type="OrthoDB" id="341578at2759"/>
<dbReference type="PhylomeDB" id="Q03963"/>
<dbReference type="TreeFam" id="TF317576"/>
<dbReference type="Reactome" id="R-MMU-1169408">
    <property type="pathway name" value="ISG15 antiviral mechanism"/>
</dbReference>
<dbReference type="Reactome" id="R-MMU-9833482">
    <property type="pathway name" value="PKR-mediated signaling"/>
</dbReference>
<dbReference type="BioGRID-ORCS" id="19106">
    <property type="hits" value="6 hits in 83 CRISPR screens"/>
</dbReference>
<dbReference type="ChiTaRS" id="Eif2ak2">
    <property type="organism name" value="mouse"/>
</dbReference>
<dbReference type="EvolutionaryTrace" id="Q03963"/>
<dbReference type="PRO" id="PR:Q03963"/>
<dbReference type="Proteomes" id="UP000000589">
    <property type="component" value="Chromosome 17"/>
</dbReference>
<dbReference type="RNAct" id="Q03963">
    <property type="molecule type" value="protein"/>
</dbReference>
<dbReference type="Bgee" id="ENSMUSG00000024079">
    <property type="expression patterns" value="Expressed in small intestine Peyer's patch and 244 other cell types or tissues"/>
</dbReference>
<dbReference type="GO" id="GO:0005737">
    <property type="term" value="C:cytoplasm"/>
    <property type="evidence" value="ECO:0000250"/>
    <property type="project" value="UniProtKB"/>
</dbReference>
<dbReference type="GO" id="GO:0005829">
    <property type="term" value="C:cytosol"/>
    <property type="evidence" value="ECO:0007669"/>
    <property type="project" value="Ensembl"/>
</dbReference>
<dbReference type="GO" id="GO:0005634">
    <property type="term" value="C:nucleus"/>
    <property type="evidence" value="ECO:0007669"/>
    <property type="project" value="UniProtKB-SubCell"/>
</dbReference>
<dbReference type="GO" id="GO:0048471">
    <property type="term" value="C:perinuclear region of cytoplasm"/>
    <property type="evidence" value="ECO:0000250"/>
    <property type="project" value="UniProtKB"/>
</dbReference>
<dbReference type="GO" id="GO:0005524">
    <property type="term" value="F:ATP binding"/>
    <property type="evidence" value="ECO:0007669"/>
    <property type="project" value="UniProtKB-KW"/>
</dbReference>
<dbReference type="GO" id="GO:0003725">
    <property type="term" value="F:double-stranded RNA binding"/>
    <property type="evidence" value="ECO:0000314"/>
    <property type="project" value="MGI"/>
</dbReference>
<dbReference type="GO" id="GO:0004694">
    <property type="term" value="F:eukaryotic translation initiation factor 2alpha kinase activity"/>
    <property type="evidence" value="ECO:0007669"/>
    <property type="project" value="Ensembl"/>
</dbReference>
<dbReference type="GO" id="GO:0042802">
    <property type="term" value="F:identical protein binding"/>
    <property type="evidence" value="ECO:0007669"/>
    <property type="project" value="Ensembl"/>
</dbReference>
<dbReference type="GO" id="GO:0004715">
    <property type="term" value="F:non-membrane spanning protein tyrosine kinase activity"/>
    <property type="evidence" value="ECO:0007669"/>
    <property type="project" value="UniProtKB-EC"/>
</dbReference>
<dbReference type="GO" id="GO:0004672">
    <property type="term" value="F:protein kinase activity"/>
    <property type="evidence" value="ECO:0000314"/>
    <property type="project" value="MGI"/>
</dbReference>
<dbReference type="GO" id="GO:0106310">
    <property type="term" value="F:protein serine kinase activity"/>
    <property type="evidence" value="ECO:0007669"/>
    <property type="project" value="RHEA"/>
</dbReference>
<dbReference type="GO" id="GO:0140374">
    <property type="term" value="P:antiviral innate immune response"/>
    <property type="evidence" value="ECO:0007669"/>
    <property type="project" value="Ensembl"/>
</dbReference>
<dbReference type="GO" id="GO:0034198">
    <property type="term" value="P:cellular response to amino acid starvation"/>
    <property type="evidence" value="ECO:0007669"/>
    <property type="project" value="Ensembl"/>
</dbReference>
<dbReference type="GO" id="GO:0030968">
    <property type="term" value="P:endoplasmic reticulum unfolded protein response"/>
    <property type="evidence" value="ECO:0000314"/>
    <property type="project" value="MGI"/>
</dbReference>
<dbReference type="GO" id="GO:0043066">
    <property type="term" value="P:negative regulation of apoptotic process"/>
    <property type="evidence" value="ECO:0000316"/>
    <property type="project" value="MGI"/>
</dbReference>
<dbReference type="GO" id="GO:0033689">
    <property type="term" value="P:negative regulation of osteoblast proliferation"/>
    <property type="evidence" value="ECO:0000250"/>
    <property type="project" value="UniProtKB"/>
</dbReference>
<dbReference type="GO" id="GO:0017148">
    <property type="term" value="P:negative regulation of translation"/>
    <property type="evidence" value="ECO:0000250"/>
    <property type="project" value="UniProtKB"/>
</dbReference>
<dbReference type="GO" id="GO:0045071">
    <property type="term" value="P:negative regulation of viral genome replication"/>
    <property type="evidence" value="ECO:0000315"/>
    <property type="project" value="UniProtKB"/>
</dbReference>
<dbReference type="GO" id="GO:0032722">
    <property type="term" value="P:positive regulation of chemokine production"/>
    <property type="evidence" value="ECO:0000315"/>
    <property type="project" value="UniProtKB"/>
</dbReference>
<dbReference type="GO" id="GO:0001819">
    <property type="term" value="P:positive regulation of cytokine production"/>
    <property type="evidence" value="ECO:0000315"/>
    <property type="project" value="UniProtKB"/>
</dbReference>
<dbReference type="GO" id="GO:0043410">
    <property type="term" value="P:positive regulation of MAPK cascade"/>
    <property type="evidence" value="ECO:0000250"/>
    <property type="project" value="UniProtKB"/>
</dbReference>
<dbReference type="GO" id="GO:0051092">
    <property type="term" value="P:positive regulation of NF-kappaB transcription factor activity"/>
    <property type="evidence" value="ECO:0000250"/>
    <property type="project" value="UniProtKB"/>
</dbReference>
<dbReference type="GO" id="GO:1901224">
    <property type="term" value="P:positive regulation of non-canonical NF-kappaB signal transduction"/>
    <property type="evidence" value="ECO:0000315"/>
    <property type="project" value="UniProtKB"/>
</dbReference>
<dbReference type="GO" id="GO:0032874">
    <property type="term" value="P:positive regulation of stress-activated MAPK cascade"/>
    <property type="evidence" value="ECO:0000315"/>
    <property type="project" value="UniProtKB"/>
</dbReference>
<dbReference type="GO" id="GO:0046777">
    <property type="term" value="P:protein autophosphorylation"/>
    <property type="evidence" value="ECO:0000314"/>
    <property type="project" value="UniProtKB"/>
</dbReference>
<dbReference type="GO" id="GO:1901532">
    <property type="term" value="P:regulation of hematopoietic progenitor cell differentiation"/>
    <property type="evidence" value="ECO:0000315"/>
    <property type="project" value="UniProtKB"/>
</dbReference>
<dbReference type="GO" id="GO:1902036">
    <property type="term" value="P:regulation of hematopoietic stem cell differentiation"/>
    <property type="evidence" value="ECO:0000315"/>
    <property type="project" value="UniProtKB"/>
</dbReference>
<dbReference type="GO" id="GO:1902033">
    <property type="term" value="P:regulation of hematopoietic stem cell proliferation"/>
    <property type="evidence" value="ECO:0000315"/>
    <property type="project" value="UniProtKB"/>
</dbReference>
<dbReference type="GO" id="GO:1900225">
    <property type="term" value="P:regulation of NLRP3 inflammasome complex assembly"/>
    <property type="evidence" value="ECO:0000315"/>
    <property type="project" value="UniProtKB"/>
</dbReference>
<dbReference type="GO" id="GO:0035455">
    <property type="term" value="P:response to interferon-alpha"/>
    <property type="evidence" value="ECO:0000250"/>
    <property type="project" value="UniProtKB"/>
</dbReference>
<dbReference type="GO" id="GO:0009615">
    <property type="term" value="P:response to virus"/>
    <property type="evidence" value="ECO:0000250"/>
    <property type="project" value="UniProtKB"/>
</dbReference>
<dbReference type="GO" id="GO:0006412">
    <property type="term" value="P:translation"/>
    <property type="evidence" value="ECO:0000314"/>
    <property type="project" value="MGI"/>
</dbReference>
<dbReference type="CDD" id="cd19903">
    <property type="entry name" value="DSRM_EIF2AK2_rpt1"/>
    <property type="match status" value="1"/>
</dbReference>
<dbReference type="CDD" id="cd19904">
    <property type="entry name" value="DSRM_EIF2AK2_rpt2"/>
    <property type="match status" value="1"/>
</dbReference>
<dbReference type="FunFam" id="3.30.160.20:FF:000045">
    <property type="entry name" value="Eukaryotic translation initiation factor 2-alpha kinase 2"/>
    <property type="match status" value="1"/>
</dbReference>
<dbReference type="FunFam" id="3.30.200.20:FF:000536">
    <property type="entry name" value="Eukaryotic translation initiation factor 2-alpha kinase 2"/>
    <property type="match status" value="1"/>
</dbReference>
<dbReference type="FunFam" id="1.10.510.10:FF:000251">
    <property type="entry name" value="eukaryotic translation initiation factor 2-alpha kinase 3"/>
    <property type="match status" value="1"/>
</dbReference>
<dbReference type="FunFam" id="3.30.160.20:FF:000139">
    <property type="entry name" value="Interferon-induced, double-stranded RNA-activated protein kinase"/>
    <property type="match status" value="1"/>
</dbReference>
<dbReference type="Gene3D" id="3.30.160.20">
    <property type="match status" value="2"/>
</dbReference>
<dbReference type="Gene3D" id="3.30.200.20">
    <property type="entry name" value="Phosphorylase Kinase, domain 1"/>
    <property type="match status" value="1"/>
</dbReference>
<dbReference type="Gene3D" id="1.10.510.10">
    <property type="entry name" value="Transferase(Phosphotransferase) domain 1"/>
    <property type="match status" value="1"/>
</dbReference>
<dbReference type="InterPro" id="IPR050339">
    <property type="entry name" value="CC_SR_Kinase"/>
</dbReference>
<dbReference type="InterPro" id="IPR014720">
    <property type="entry name" value="dsRBD_dom"/>
</dbReference>
<dbReference type="InterPro" id="IPR044452">
    <property type="entry name" value="EIF2AK2_DSRM_1"/>
</dbReference>
<dbReference type="InterPro" id="IPR044453">
    <property type="entry name" value="EIF2AK2_DSRM_2"/>
</dbReference>
<dbReference type="InterPro" id="IPR011009">
    <property type="entry name" value="Kinase-like_dom_sf"/>
</dbReference>
<dbReference type="InterPro" id="IPR000719">
    <property type="entry name" value="Prot_kinase_dom"/>
</dbReference>
<dbReference type="InterPro" id="IPR017441">
    <property type="entry name" value="Protein_kinase_ATP_BS"/>
</dbReference>
<dbReference type="InterPro" id="IPR008271">
    <property type="entry name" value="Ser/Thr_kinase_AS"/>
</dbReference>
<dbReference type="PANTHER" id="PTHR11042">
    <property type="entry name" value="EUKARYOTIC TRANSLATION INITIATION FACTOR 2-ALPHA KINASE EIF2-ALPHA KINASE -RELATED"/>
    <property type="match status" value="1"/>
</dbReference>
<dbReference type="PANTHER" id="PTHR11042:SF163">
    <property type="entry name" value="INTERFERON-INDUCED, DOUBLE-STRANDED RNA-ACTIVATED PROTEIN KINASE"/>
    <property type="match status" value="1"/>
</dbReference>
<dbReference type="Pfam" id="PF00035">
    <property type="entry name" value="dsrm"/>
    <property type="match status" value="2"/>
</dbReference>
<dbReference type="Pfam" id="PF00069">
    <property type="entry name" value="Pkinase"/>
    <property type="match status" value="1"/>
</dbReference>
<dbReference type="SMART" id="SM00358">
    <property type="entry name" value="DSRM"/>
    <property type="match status" value="2"/>
</dbReference>
<dbReference type="SMART" id="SM00220">
    <property type="entry name" value="S_TKc"/>
    <property type="match status" value="1"/>
</dbReference>
<dbReference type="SUPFAM" id="SSF54768">
    <property type="entry name" value="dsRNA-binding domain-like"/>
    <property type="match status" value="2"/>
</dbReference>
<dbReference type="SUPFAM" id="SSF56112">
    <property type="entry name" value="Protein kinase-like (PK-like)"/>
    <property type="match status" value="1"/>
</dbReference>
<dbReference type="PROSITE" id="PS50137">
    <property type="entry name" value="DS_RBD"/>
    <property type="match status" value="2"/>
</dbReference>
<dbReference type="PROSITE" id="PS00107">
    <property type="entry name" value="PROTEIN_KINASE_ATP"/>
    <property type="match status" value="1"/>
</dbReference>
<dbReference type="PROSITE" id="PS50011">
    <property type="entry name" value="PROTEIN_KINASE_DOM"/>
    <property type="match status" value="1"/>
</dbReference>
<dbReference type="PROSITE" id="PS00108">
    <property type="entry name" value="PROTEIN_KINASE_ST"/>
    <property type="match status" value="1"/>
</dbReference>